<name>ORN_SALTY</name>
<proteinExistence type="inferred from homology"/>
<comment type="function">
    <text evidence="2">3'-to-5' exoribonuclease specific for small oligoribonucleotides.</text>
</comment>
<comment type="subcellular location">
    <subcellularLocation>
        <location evidence="2">Cytoplasm</location>
    </subcellularLocation>
</comment>
<comment type="similarity">
    <text evidence="2">Belongs to the oligoribonuclease family.</text>
</comment>
<protein>
    <recommendedName>
        <fullName evidence="2">Oligoribonuclease</fullName>
        <ecNumber evidence="2">3.1.15.-</ecNumber>
    </recommendedName>
</protein>
<evidence type="ECO:0000250" key="1"/>
<evidence type="ECO:0000255" key="2">
    <source>
        <dbReference type="HAMAP-Rule" id="MF_00045"/>
    </source>
</evidence>
<sequence>MSADENNLIWIDLEMTGLDPERDRIIEIATLVTDASLNILAEGPTIAVHQSDAQLALMDDWNVRTHTGSGLVDRVKASTMGERDAELATIEFLKTWVPAGKSPICGNSIGQDRRFLFKYMPELEAYFHYRYLDVSTLKELARRWKPEILAGFTKQGTHQAMDDIRESVAELAYYREHFIKL</sequence>
<feature type="initiator methionine" description="Removed" evidence="1">
    <location>
        <position position="1"/>
    </location>
</feature>
<feature type="chain" id="PRO_0000111069" description="Oligoribonuclease">
    <location>
        <begin position="2"/>
        <end position="181"/>
    </location>
</feature>
<feature type="domain" description="Exonuclease" evidence="2">
    <location>
        <begin position="8"/>
        <end position="171"/>
    </location>
</feature>
<feature type="active site" evidence="2">
    <location>
        <position position="129"/>
    </location>
</feature>
<dbReference type="EC" id="3.1.15.-" evidence="2"/>
<dbReference type="EMBL" id="AE006468">
    <property type="protein sequence ID" value="AAL23173.1"/>
    <property type="molecule type" value="Genomic_DNA"/>
</dbReference>
<dbReference type="RefSeq" id="NP_463214.1">
    <property type="nucleotide sequence ID" value="NC_003197.2"/>
</dbReference>
<dbReference type="RefSeq" id="WP_001271546.1">
    <property type="nucleotide sequence ID" value="NC_003197.2"/>
</dbReference>
<dbReference type="SMR" id="P65599"/>
<dbReference type="STRING" id="99287.STM4350"/>
<dbReference type="PaxDb" id="99287-STM4350"/>
<dbReference type="GeneID" id="1255876"/>
<dbReference type="KEGG" id="stm:STM4350"/>
<dbReference type="PATRIC" id="fig|99287.12.peg.4577"/>
<dbReference type="HOGENOM" id="CLU_064761_2_0_6"/>
<dbReference type="OMA" id="AFFHYRN"/>
<dbReference type="PhylomeDB" id="P65599"/>
<dbReference type="BioCyc" id="SENT99287:STM4350-MONOMER"/>
<dbReference type="Proteomes" id="UP000001014">
    <property type="component" value="Chromosome"/>
</dbReference>
<dbReference type="GO" id="GO:0005737">
    <property type="term" value="C:cytoplasm"/>
    <property type="evidence" value="ECO:0007669"/>
    <property type="project" value="UniProtKB-SubCell"/>
</dbReference>
<dbReference type="GO" id="GO:0000175">
    <property type="term" value="F:3'-5'-RNA exonuclease activity"/>
    <property type="evidence" value="ECO:0007669"/>
    <property type="project" value="InterPro"/>
</dbReference>
<dbReference type="GO" id="GO:0003676">
    <property type="term" value="F:nucleic acid binding"/>
    <property type="evidence" value="ECO:0007669"/>
    <property type="project" value="InterPro"/>
</dbReference>
<dbReference type="GO" id="GO:0006259">
    <property type="term" value="P:DNA metabolic process"/>
    <property type="evidence" value="ECO:0007669"/>
    <property type="project" value="UniProtKB-ARBA"/>
</dbReference>
<dbReference type="CDD" id="cd06135">
    <property type="entry name" value="Orn"/>
    <property type="match status" value="1"/>
</dbReference>
<dbReference type="FunFam" id="3.30.420.10:FF:000003">
    <property type="entry name" value="Oligoribonuclease"/>
    <property type="match status" value="1"/>
</dbReference>
<dbReference type="Gene3D" id="3.30.420.10">
    <property type="entry name" value="Ribonuclease H-like superfamily/Ribonuclease H"/>
    <property type="match status" value="1"/>
</dbReference>
<dbReference type="HAMAP" id="MF_00045">
    <property type="entry name" value="Oligoribonuclease"/>
    <property type="match status" value="1"/>
</dbReference>
<dbReference type="InterPro" id="IPR013520">
    <property type="entry name" value="Exonuclease_RNaseT/DNA_pol3"/>
</dbReference>
<dbReference type="InterPro" id="IPR022894">
    <property type="entry name" value="Oligoribonuclease"/>
</dbReference>
<dbReference type="InterPro" id="IPR012337">
    <property type="entry name" value="RNaseH-like_sf"/>
</dbReference>
<dbReference type="InterPro" id="IPR036397">
    <property type="entry name" value="RNaseH_sf"/>
</dbReference>
<dbReference type="NCBIfam" id="NF003765">
    <property type="entry name" value="PRK05359.1"/>
    <property type="match status" value="1"/>
</dbReference>
<dbReference type="PANTHER" id="PTHR11046">
    <property type="entry name" value="OLIGORIBONUCLEASE, MITOCHONDRIAL"/>
    <property type="match status" value="1"/>
</dbReference>
<dbReference type="PANTHER" id="PTHR11046:SF0">
    <property type="entry name" value="OLIGORIBONUCLEASE, MITOCHONDRIAL"/>
    <property type="match status" value="1"/>
</dbReference>
<dbReference type="Pfam" id="PF00929">
    <property type="entry name" value="RNase_T"/>
    <property type="match status" value="1"/>
</dbReference>
<dbReference type="SMART" id="SM00479">
    <property type="entry name" value="EXOIII"/>
    <property type="match status" value="1"/>
</dbReference>
<dbReference type="SUPFAM" id="SSF53098">
    <property type="entry name" value="Ribonuclease H-like"/>
    <property type="match status" value="1"/>
</dbReference>
<gene>
    <name evidence="2" type="primary">orn</name>
    <name type="ordered locus">STM4350</name>
</gene>
<reference key="1">
    <citation type="journal article" date="2001" name="Nature">
        <title>Complete genome sequence of Salmonella enterica serovar Typhimurium LT2.</title>
        <authorList>
            <person name="McClelland M."/>
            <person name="Sanderson K.E."/>
            <person name="Spieth J."/>
            <person name="Clifton S.W."/>
            <person name="Latreille P."/>
            <person name="Courtney L."/>
            <person name="Porwollik S."/>
            <person name="Ali J."/>
            <person name="Dante M."/>
            <person name="Du F."/>
            <person name="Hou S."/>
            <person name="Layman D."/>
            <person name="Leonard S."/>
            <person name="Nguyen C."/>
            <person name="Scott K."/>
            <person name="Holmes A."/>
            <person name="Grewal N."/>
            <person name="Mulvaney E."/>
            <person name="Ryan E."/>
            <person name="Sun H."/>
            <person name="Florea L."/>
            <person name="Miller W."/>
            <person name="Stoneking T."/>
            <person name="Nhan M."/>
            <person name="Waterston R."/>
            <person name="Wilson R.K."/>
        </authorList>
    </citation>
    <scope>NUCLEOTIDE SEQUENCE [LARGE SCALE GENOMIC DNA]</scope>
    <source>
        <strain>LT2 / SGSC1412 / ATCC 700720</strain>
    </source>
</reference>
<accession>P65599</accession>
<accession>Q8XFY9</accession>
<organism>
    <name type="scientific">Salmonella typhimurium (strain LT2 / SGSC1412 / ATCC 700720)</name>
    <dbReference type="NCBI Taxonomy" id="99287"/>
    <lineage>
        <taxon>Bacteria</taxon>
        <taxon>Pseudomonadati</taxon>
        <taxon>Pseudomonadota</taxon>
        <taxon>Gammaproteobacteria</taxon>
        <taxon>Enterobacterales</taxon>
        <taxon>Enterobacteriaceae</taxon>
        <taxon>Salmonella</taxon>
    </lineage>
</organism>
<keyword id="KW-0963">Cytoplasm</keyword>
<keyword id="KW-0269">Exonuclease</keyword>
<keyword id="KW-0378">Hydrolase</keyword>
<keyword id="KW-0540">Nuclease</keyword>
<keyword id="KW-1185">Reference proteome</keyword>